<feature type="chain" id="PRO_0000297599" description="Zinc transporter ZIP9">
    <location>
        <begin position="1"/>
        <end position="308"/>
    </location>
</feature>
<feature type="transmembrane region" description="Helical" evidence="3">
    <location>
        <begin position="4"/>
        <end position="24"/>
    </location>
</feature>
<feature type="transmembrane region" description="Helical" evidence="3">
    <location>
        <begin position="35"/>
        <end position="55"/>
    </location>
</feature>
<feature type="transmembrane region" description="Helical" evidence="3">
    <location>
        <begin position="107"/>
        <end position="127"/>
    </location>
</feature>
<feature type="transmembrane region" description="Helical" evidence="3">
    <location>
        <begin position="147"/>
        <end position="167"/>
    </location>
</feature>
<feature type="transmembrane region" description="Helical" evidence="3">
    <location>
        <begin position="177"/>
        <end position="197"/>
    </location>
</feature>
<feature type="transmembrane region" description="Helical" evidence="3">
    <location>
        <begin position="211"/>
        <end position="231"/>
    </location>
</feature>
<feature type="transmembrane region" description="Helical" evidence="3">
    <location>
        <begin position="245"/>
        <end position="265"/>
    </location>
</feature>
<feature type="transmembrane region" description="Helical" evidence="3">
    <location>
        <begin position="287"/>
        <end position="307"/>
    </location>
</feature>
<feature type="glycosylation site" description="N-linked (GlcNAc...) asparagine" evidence="3">
    <location>
        <position position="29"/>
    </location>
</feature>
<feature type="glycosylation site" description="N-linked (GlcNAc...) asparagine" evidence="3">
    <location>
        <position position="242"/>
    </location>
</feature>
<gene>
    <name evidence="6" type="primary">Slc39a9</name>
    <name type="synonym">Zip9</name>
</gene>
<comment type="function">
    <text evidence="1 2 4">Transports zinc ions across cell and organelle membranes into the cytoplasm and regulates intracellular zinc homeostasis. Participates in the zinc ions efflux out of the secretory compartments. Regulates intracellular zinc level, resulting in the enhancement of AKT1 and MAPK3/MAPK1 (Erk1/2) phosphorylation in response to the BCR activation (By similarity). Also functions as a membrane androgen receptor that mediates, through a G protein, the non-classical androgen signaling pathway, characterized by the activation of MAPK3/MAPK1 (Erk1/2) and transcription factors CREB1 or ATF1 (PubMed:26208885). This pathway contributes to CLDN1 and CLDN5 expression and tight junction formation between adjacent Sertoli cells (By similarity). Mediates androgen-induced vascular endothelial cell proliferation through activation of an inhibitory G protein leading to the AKT1 and MAPK3/MAPK1 (Erk1/2) activation which in turn modulate inhibition (phosphorylation) of GSK3B and CCND1 transcription. Moreover, has dual functions as a membrane-bound androgen receptor and as an androgen-dependent zinc transporter both of which are mediated through an inhibitory G protein (Gi) that mediates both MAP kinase and zinc signaling leading to the androgen-dependent apoptotic process (By similarity).</text>
</comment>
<comment type="catalytic activity">
    <reaction evidence="2">
        <text>Zn(2+)(in) = Zn(2+)(out)</text>
        <dbReference type="Rhea" id="RHEA:29351"/>
        <dbReference type="ChEBI" id="CHEBI:29105"/>
    </reaction>
</comment>
<comment type="subcellular location">
    <subcellularLocation>
        <location evidence="2">Golgi apparatus</location>
        <location evidence="2">trans-Golgi network membrane</location>
    </subcellularLocation>
    <subcellularLocation>
        <location evidence="2">Cell membrane</location>
        <topology evidence="2">Multi-pass membrane protein</topology>
    </subcellularLocation>
    <subcellularLocation>
        <location evidence="2">Cytoplasm</location>
        <location evidence="2">Perinuclear region</location>
    </subcellularLocation>
    <subcellularLocation>
        <location evidence="2">Mitochondrion</location>
    </subcellularLocation>
    <subcellularLocation>
        <location evidence="2">Nucleus</location>
    </subcellularLocation>
</comment>
<comment type="similarity">
    <text evidence="5">Belongs to the ZIP transporter (TC 2.A.5) family.</text>
</comment>
<evidence type="ECO:0000250" key="1">
    <source>
        <dbReference type="UniProtKB" id="Q3KR82"/>
    </source>
</evidence>
<evidence type="ECO:0000250" key="2">
    <source>
        <dbReference type="UniProtKB" id="Q9NUM3"/>
    </source>
</evidence>
<evidence type="ECO:0000255" key="3"/>
<evidence type="ECO:0000269" key="4">
    <source>
    </source>
</evidence>
<evidence type="ECO:0000305" key="5"/>
<evidence type="ECO:0000312" key="6">
    <source>
        <dbReference type="MGI" id="MGI:1914820"/>
    </source>
</evidence>
<dbReference type="EMBL" id="AK080462">
    <property type="protein sequence ID" value="BAC37924.1"/>
    <property type="molecule type" value="mRNA"/>
</dbReference>
<dbReference type="EMBL" id="AK090062">
    <property type="protein sequence ID" value="BAC41073.1"/>
    <property type="molecule type" value="mRNA"/>
</dbReference>
<dbReference type="EMBL" id="BC117754">
    <property type="protein sequence ID" value="AAI17755.1"/>
    <property type="molecule type" value="mRNA"/>
</dbReference>
<dbReference type="EMBL" id="BC117755">
    <property type="protein sequence ID" value="AAI17756.1"/>
    <property type="molecule type" value="mRNA"/>
</dbReference>
<dbReference type="EMBL" id="BC158056">
    <property type="protein sequence ID" value="AAI58057.1"/>
    <property type="molecule type" value="mRNA"/>
</dbReference>
<dbReference type="CCDS" id="CCDS49099.1"/>
<dbReference type="RefSeq" id="NP_080520.2">
    <property type="nucleotide sequence ID" value="NM_026244.2"/>
</dbReference>
<dbReference type="RefSeq" id="XP_017170610.1">
    <property type="nucleotide sequence ID" value="XM_017315121.3"/>
</dbReference>
<dbReference type="SMR" id="Q8BFU1"/>
<dbReference type="BioGRID" id="236547">
    <property type="interactions" value="2"/>
</dbReference>
<dbReference type="FunCoup" id="Q8BFU1">
    <property type="interactions" value="2319"/>
</dbReference>
<dbReference type="STRING" id="10090.ENSMUSP00000082343"/>
<dbReference type="GlyCosmos" id="Q8BFU1">
    <property type="glycosylation" value="2 sites, No reported glycans"/>
</dbReference>
<dbReference type="GlyGen" id="Q8BFU1">
    <property type="glycosylation" value="2 sites"/>
</dbReference>
<dbReference type="iPTMnet" id="Q8BFU1"/>
<dbReference type="PhosphoSitePlus" id="Q8BFU1"/>
<dbReference type="PaxDb" id="10090-ENSMUSP00000082343"/>
<dbReference type="ProteomicsDB" id="256574"/>
<dbReference type="Antibodypedia" id="107">
    <property type="antibodies" value="136 antibodies from 30 providers"/>
</dbReference>
<dbReference type="Ensembl" id="ENSMUST00000085245.7">
    <property type="protein sequence ID" value="ENSMUSP00000082343.6"/>
    <property type="gene ID" value="ENSMUSG00000048833.10"/>
</dbReference>
<dbReference type="GeneID" id="328133"/>
<dbReference type="KEGG" id="mmu:328133"/>
<dbReference type="UCSC" id="uc007obb.2">
    <property type="organism name" value="mouse"/>
</dbReference>
<dbReference type="AGR" id="MGI:1914820"/>
<dbReference type="CTD" id="55334"/>
<dbReference type="MGI" id="MGI:1914820">
    <property type="gene designation" value="Slc39a9"/>
</dbReference>
<dbReference type="VEuPathDB" id="HostDB:ENSMUSG00000048833"/>
<dbReference type="eggNOG" id="KOG3907">
    <property type="taxonomic scope" value="Eukaryota"/>
</dbReference>
<dbReference type="GeneTree" id="ENSGT00390000010094"/>
<dbReference type="HOGENOM" id="CLU_028824_1_0_1"/>
<dbReference type="InParanoid" id="Q8BFU1"/>
<dbReference type="OMA" id="DDFPSIC"/>
<dbReference type="OrthoDB" id="19859at2759"/>
<dbReference type="PhylomeDB" id="Q8BFU1"/>
<dbReference type="TreeFam" id="TF315051"/>
<dbReference type="BioGRID-ORCS" id="328133">
    <property type="hits" value="5 hits in 79 CRISPR screens"/>
</dbReference>
<dbReference type="ChiTaRS" id="Slc39a9">
    <property type="organism name" value="mouse"/>
</dbReference>
<dbReference type="PRO" id="PR:Q8BFU1"/>
<dbReference type="Proteomes" id="UP000000589">
    <property type="component" value="Chromosome 12"/>
</dbReference>
<dbReference type="RNAct" id="Q8BFU1">
    <property type="molecule type" value="protein"/>
</dbReference>
<dbReference type="Bgee" id="ENSMUSG00000048833">
    <property type="expression patterns" value="Expressed in lacrimal gland and 252 other cell types or tissues"/>
</dbReference>
<dbReference type="ExpressionAtlas" id="Q8BFU1">
    <property type="expression patterns" value="baseline and differential"/>
</dbReference>
<dbReference type="GO" id="GO:0031966">
    <property type="term" value="C:mitochondrial membrane"/>
    <property type="evidence" value="ECO:0000250"/>
    <property type="project" value="UniProtKB"/>
</dbReference>
<dbReference type="GO" id="GO:0005739">
    <property type="term" value="C:mitochondrion"/>
    <property type="evidence" value="ECO:0000250"/>
    <property type="project" value="UniProtKB"/>
</dbReference>
<dbReference type="GO" id="GO:0005634">
    <property type="term" value="C:nucleus"/>
    <property type="evidence" value="ECO:0000250"/>
    <property type="project" value="UniProtKB"/>
</dbReference>
<dbReference type="GO" id="GO:0048471">
    <property type="term" value="C:perinuclear region of cytoplasm"/>
    <property type="evidence" value="ECO:0000250"/>
    <property type="project" value="UniProtKB"/>
</dbReference>
<dbReference type="GO" id="GO:0005886">
    <property type="term" value="C:plasma membrane"/>
    <property type="evidence" value="ECO:0000250"/>
    <property type="project" value="UniProtKB"/>
</dbReference>
<dbReference type="GO" id="GO:0005802">
    <property type="term" value="C:trans-Golgi network"/>
    <property type="evidence" value="ECO:0000250"/>
    <property type="project" value="UniProtKB"/>
</dbReference>
<dbReference type="GO" id="GO:0005497">
    <property type="term" value="F:androgen binding"/>
    <property type="evidence" value="ECO:0000250"/>
    <property type="project" value="UniProtKB"/>
</dbReference>
<dbReference type="GO" id="GO:0004930">
    <property type="term" value="F:G protein-coupled receptor activity"/>
    <property type="evidence" value="ECO:0000250"/>
    <property type="project" value="UniProtKB"/>
</dbReference>
<dbReference type="GO" id="GO:0022883">
    <property type="term" value="F:zinc efflux transmembrane transporter activity"/>
    <property type="evidence" value="ECO:0000250"/>
    <property type="project" value="UniProtKB"/>
</dbReference>
<dbReference type="GO" id="GO:0005385">
    <property type="term" value="F:zinc ion transmembrane transporter activity"/>
    <property type="evidence" value="ECO:0000250"/>
    <property type="project" value="UniProtKB"/>
</dbReference>
<dbReference type="GO" id="GO:0070830">
    <property type="term" value="P:bicellular tight junction assembly"/>
    <property type="evidence" value="ECO:0000250"/>
    <property type="project" value="UniProtKB"/>
</dbReference>
<dbReference type="GO" id="GO:0006882">
    <property type="term" value="P:intracellular zinc ion homeostasis"/>
    <property type="evidence" value="ECO:0000250"/>
    <property type="project" value="UniProtKB"/>
</dbReference>
<dbReference type="GO" id="GO:2000654">
    <property type="term" value="P:regulation of cellular response to testosterone stimulus"/>
    <property type="evidence" value="ECO:0000315"/>
    <property type="project" value="UniProtKB"/>
</dbReference>
<dbReference type="GO" id="GO:1905562">
    <property type="term" value="P:regulation of vascular endothelial cell proliferation"/>
    <property type="evidence" value="ECO:0000250"/>
    <property type="project" value="UniProtKB"/>
</dbReference>
<dbReference type="GO" id="GO:0071577">
    <property type="term" value="P:zinc ion transmembrane transport"/>
    <property type="evidence" value="ECO:0000250"/>
    <property type="project" value="UniProtKB"/>
</dbReference>
<dbReference type="InterPro" id="IPR003689">
    <property type="entry name" value="ZIP"/>
</dbReference>
<dbReference type="InterPro" id="IPR045891">
    <property type="entry name" value="ZIP9"/>
</dbReference>
<dbReference type="PANTHER" id="PTHR16133">
    <property type="entry name" value="SOLUTE CARRIER FAMILY 39 ZINC TRANSPORTER , MEMBER 9-RELATED"/>
    <property type="match status" value="1"/>
</dbReference>
<dbReference type="PANTHER" id="PTHR16133:SF5">
    <property type="entry name" value="ZINC TRANSPORTER ZIP9"/>
    <property type="match status" value="1"/>
</dbReference>
<dbReference type="Pfam" id="PF02535">
    <property type="entry name" value="Zip"/>
    <property type="match status" value="1"/>
</dbReference>
<accession>Q8BFU1</accession>
<accession>B2RY14</accession>
<organism>
    <name type="scientific">Mus musculus</name>
    <name type="common">Mouse</name>
    <dbReference type="NCBI Taxonomy" id="10090"/>
    <lineage>
        <taxon>Eukaryota</taxon>
        <taxon>Metazoa</taxon>
        <taxon>Chordata</taxon>
        <taxon>Craniata</taxon>
        <taxon>Vertebrata</taxon>
        <taxon>Euteleostomi</taxon>
        <taxon>Mammalia</taxon>
        <taxon>Eutheria</taxon>
        <taxon>Euarchontoglires</taxon>
        <taxon>Glires</taxon>
        <taxon>Rodentia</taxon>
        <taxon>Myomorpha</taxon>
        <taxon>Muroidea</taxon>
        <taxon>Muridae</taxon>
        <taxon>Murinae</taxon>
        <taxon>Mus</taxon>
        <taxon>Mus</taxon>
    </lineage>
</organism>
<name>S39A9_MOUSE</name>
<keyword id="KW-1003">Cell membrane</keyword>
<keyword id="KW-0963">Cytoplasm</keyword>
<keyword id="KW-0325">Glycoprotein</keyword>
<keyword id="KW-0333">Golgi apparatus</keyword>
<keyword id="KW-0406">Ion transport</keyword>
<keyword id="KW-0472">Membrane</keyword>
<keyword id="KW-0496">Mitochondrion</keyword>
<keyword id="KW-0539">Nucleus</keyword>
<keyword id="KW-1185">Reference proteome</keyword>
<keyword id="KW-0812">Transmembrane</keyword>
<keyword id="KW-1133">Transmembrane helix</keyword>
<keyword id="KW-0813">Transport</keyword>
<keyword id="KW-0862">Zinc</keyword>
<keyword id="KW-0864">Zinc transport</keyword>
<reference key="1">
    <citation type="journal article" date="2005" name="Science">
        <title>The transcriptional landscape of the mammalian genome.</title>
        <authorList>
            <person name="Carninci P."/>
            <person name="Kasukawa T."/>
            <person name="Katayama S."/>
            <person name="Gough J."/>
            <person name="Frith M.C."/>
            <person name="Maeda N."/>
            <person name="Oyama R."/>
            <person name="Ravasi T."/>
            <person name="Lenhard B."/>
            <person name="Wells C."/>
            <person name="Kodzius R."/>
            <person name="Shimokawa K."/>
            <person name="Bajic V.B."/>
            <person name="Brenner S.E."/>
            <person name="Batalov S."/>
            <person name="Forrest A.R."/>
            <person name="Zavolan M."/>
            <person name="Davis M.J."/>
            <person name="Wilming L.G."/>
            <person name="Aidinis V."/>
            <person name="Allen J.E."/>
            <person name="Ambesi-Impiombato A."/>
            <person name="Apweiler R."/>
            <person name="Aturaliya R.N."/>
            <person name="Bailey T.L."/>
            <person name="Bansal M."/>
            <person name="Baxter L."/>
            <person name="Beisel K.W."/>
            <person name="Bersano T."/>
            <person name="Bono H."/>
            <person name="Chalk A.M."/>
            <person name="Chiu K.P."/>
            <person name="Choudhary V."/>
            <person name="Christoffels A."/>
            <person name="Clutterbuck D.R."/>
            <person name="Crowe M.L."/>
            <person name="Dalla E."/>
            <person name="Dalrymple B.P."/>
            <person name="de Bono B."/>
            <person name="Della Gatta G."/>
            <person name="di Bernardo D."/>
            <person name="Down T."/>
            <person name="Engstrom P."/>
            <person name="Fagiolini M."/>
            <person name="Faulkner G."/>
            <person name="Fletcher C.F."/>
            <person name="Fukushima T."/>
            <person name="Furuno M."/>
            <person name="Futaki S."/>
            <person name="Gariboldi M."/>
            <person name="Georgii-Hemming P."/>
            <person name="Gingeras T.R."/>
            <person name="Gojobori T."/>
            <person name="Green R.E."/>
            <person name="Gustincich S."/>
            <person name="Harbers M."/>
            <person name="Hayashi Y."/>
            <person name="Hensch T.K."/>
            <person name="Hirokawa N."/>
            <person name="Hill D."/>
            <person name="Huminiecki L."/>
            <person name="Iacono M."/>
            <person name="Ikeo K."/>
            <person name="Iwama A."/>
            <person name="Ishikawa T."/>
            <person name="Jakt M."/>
            <person name="Kanapin A."/>
            <person name="Katoh M."/>
            <person name="Kawasawa Y."/>
            <person name="Kelso J."/>
            <person name="Kitamura H."/>
            <person name="Kitano H."/>
            <person name="Kollias G."/>
            <person name="Krishnan S.P."/>
            <person name="Kruger A."/>
            <person name="Kummerfeld S.K."/>
            <person name="Kurochkin I.V."/>
            <person name="Lareau L.F."/>
            <person name="Lazarevic D."/>
            <person name="Lipovich L."/>
            <person name="Liu J."/>
            <person name="Liuni S."/>
            <person name="McWilliam S."/>
            <person name="Madan Babu M."/>
            <person name="Madera M."/>
            <person name="Marchionni L."/>
            <person name="Matsuda H."/>
            <person name="Matsuzawa S."/>
            <person name="Miki H."/>
            <person name="Mignone F."/>
            <person name="Miyake S."/>
            <person name="Morris K."/>
            <person name="Mottagui-Tabar S."/>
            <person name="Mulder N."/>
            <person name="Nakano N."/>
            <person name="Nakauchi H."/>
            <person name="Ng P."/>
            <person name="Nilsson R."/>
            <person name="Nishiguchi S."/>
            <person name="Nishikawa S."/>
            <person name="Nori F."/>
            <person name="Ohara O."/>
            <person name="Okazaki Y."/>
            <person name="Orlando V."/>
            <person name="Pang K.C."/>
            <person name="Pavan W.J."/>
            <person name="Pavesi G."/>
            <person name="Pesole G."/>
            <person name="Petrovsky N."/>
            <person name="Piazza S."/>
            <person name="Reed J."/>
            <person name="Reid J.F."/>
            <person name="Ring B.Z."/>
            <person name="Ringwald M."/>
            <person name="Rost B."/>
            <person name="Ruan Y."/>
            <person name="Salzberg S.L."/>
            <person name="Sandelin A."/>
            <person name="Schneider C."/>
            <person name="Schoenbach C."/>
            <person name="Sekiguchi K."/>
            <person name="Semple C.A."/>
            <person name="Seno S."/>
            <person name="Sessa L."/>
            <person name="Sheng Y."/>
            <person name="Shibata Y."/>
            <person name="Shimada H."/>
            <person name="Shimada K."/>
            <person name="Silva D."/>
            <person name="Sinclair B."/>
            <person name="Sperling S."/>
            <person name="Stupka E."/>
            <person name="Sugiura K."/>
            <person name="Sultana R."/>
            <person name="Takenaka Y."/>
            <person name="Taki K."/>
            <person name="Tammoja K."/>
            <person name="Tan S.L."/>
            <person name="Tang S."/>
            <person name="Taylor M.S."/>
            <person name="Tegner J."/>
            <person name="Teichmann S.A."/>
            <person name="Ueda H.R."/>
            <person name="van Nimwegen E."/>
            <person name="Verardo R."/>
            <person name="Wei C.L."/>
            <person name="Yagi K."/>
            <person name="Yamanishi H."/>
            <person name="Zabarovsky E."/>
            <person name="Zhu S."/>
            <person name="Zimmer A."/>
            <person name="Hide W."/>
            <person name="Bult C."/>
            <person name="Grimmond S.M."/>
            <person name="Teasdale R.D."/>
            <person name="Liu E.T."/>
            <person name="Brusic V."/>
            <person name="Quackenbush J."/>
            <person name="Wahlestedt C."/>
            <person name="Mattick J.S."/>
            <person name="Hume D.A."/>
            <person name="Kai C."/>
            <person name="Sasaki D."/>
            <person name="Tomaru Y."/>
            <person name="Fukuda S."/>
            <person name="Kanamori-Katayama M."/>
            <person name="Suzuki M."/>
            <person name="Aoki J."/>
            <person name="Arakawa T."/>
            <person name="Iida J."/>
            <person name="Imamura K."/>
            <person name="Itoh M."/>
            <person name="Kato T."/>
            <person name="Kawaji H."/>
            <person name="Kawagashira N."/>
            <person name="Kawashima T."/>
            <person name="Kojima M."/>
            <person name="Kondo S."/>
            <person name="Konno H."/>
            <person name="Nakano K."/>
            <person name="Ninomiya N."/>
            <person name="Nishio T."/>
            <person name="Okada M."/>
            <person name="Plessy C."/>
            <person name="Shibata K."/>
            <person name="Shiraki T."/>
            <person name="Suzuki S."/>
            <person name="Tagami M."/>
            <person name="Waki K."/>
            <person name="Watahiki A."/>
            <person name="Okamura-Oho Y."/>
            <person name="Suzuki H."/>
            <person name="Kawai J."/>
            <person name="Hayashizaki Y."/>
        </authorList>
    </citation>
    <scope>NUCLEOTIDE SEQUENCE [LARGE SCALE MRNA]</scope>
    <source>
        <strain>C57BL/6J</strain>
        <tissue>Bone marrow</tissue>
        <tissue>Cerebellum</tissue>
    </source>
</reference>
<reference key="2">
    <citation type="journal article" date="2004" name="Genome Res.">
        <title>The status, quality, and expansion of the NIH full-length cDNA project: the Mammalian Gene Collection (MGC).</title>
        <authorList>
            <consortium name="The MGC Project Team"/>
        </authorList>
    </citation>
    <scope>NUCLEOTIDE SEQUENCE [LARGE SCALE MRNA]</scope>
    <source>
        <tissue>Brain</tissue>
    </source>
</reference>
<reference key="3">
    <citation type="journal article" date="2015" name="Cell. Signal.">
        <title>Non-classical testosterone signaling in spermatogenic GC-2 cells is mediated through ZIP9 interacting with Gnalpha11.</title>
        <authorList>
            <person name="Shihan M."/>
            <person name="Chan K.H."/>
            <person name="Konrad L."/>
            <person name="Scheiner-Bobis G."/>
        </authorList>
    </citation>
    <scope>FUNCTION</scope>
</reference>
<sequence length="308" mass="32368">MDDFLSISLLSVAMLVGCYVAGIIPLAVNFSEERLKLVTVLGAGLLCGTALAVIVPEGVHALYEEVLEGKHHQTSEMKQNGIASDKAAEISSVHEHEHSHDHTQLHAYIGVSLVLGFVFMLLVDQIGSSHVHSSDDPETARPSSSKITTTLGLVVHAAADGVALGAAASTSQTSVQLIVFVAIMLHKAPAAFGLVSFLMHAGLERNRIRKHLLVFALAAPAMSMLTYLGLSKSSKEALSEVNATGVAMLFSAGTFLYVATVHVLPEVGGMGHSHKPDTTGGRGLSRLEVAALVLGCLIPLILSIGHQH</sequence>
<protein>
    <recommendedName>
        <fullName evidence="5">Zinc transporter ZIP9</fullName>
    </recommendedName>
    <alternativeName>
        <fullName>Solute carrier family 39 member 9</fullName>
    </alternativeName>
    <alternativeName>
        <fullName>Zrt- and Irt-like protein 9</fullName>
        <shortName>ZIP-9</shortName>
    </alternativeName>
</protein>
<proteinExistence type="evidence at transcript level"/>